<dbReference type="EC" id="2.5.1.19" evidence="1"/>
<dbReference type="EMBL" id="CP000127">
    <property type="protein sequence ID" value="ABA56710.1"/>
    <property type="molecule type" value="Genomic_DNA"/>
</dbReference>
<dbReference type="RefSeq" id="WP_002812851.1">
    <property type="nucleotide sequence ID" value="NC_007484.1"/>
</dbReference>
<dbReference type="SMR" id="Q3JEN6"/>
<dbReference type="FunCoup" id="Q3JEN6">
    <property type="interactions" value="508"/>
</dbReference>
<dbReference type="STRING" id="323261.Noc_0177"/>
<dbReference type="KEGG" id="noc:Noc_0177"/>
<dbReference type="eggNOG" id="COG0128">
    <property type="taxonomic scope" value="Bacteria"/>
</dbReference>
<dbReference type="HOGENOM" id="CLU_024321_0_1_6"/>
<dbReference type="InParanoid" id="Q3JEN6"/>
<dbReference type="UniPathway" id="UPA00053">
    <property type="reaction ID" value="UER00089"/>
</dbReference>
<dbReference type="Proteomes" id="UP000006838">
    <property type="component" value="Chromosome"/>
</dbReference>
<dbReference type="GO" id="GO:0005737">
    <property type="term" value="C:cytoplasm"/>
    <property type="evidence" value="ECO:0007669"/>
    <property type="project" value="UniProtKB-SubCell"/>
</dbReference>
<dbReference type="GO" id="GO:0003866">
    <property type="term" value="F:3-phosphoshikimate 1-carboxyvinyltransferase activity"/>
    <property type="evidence" value="ECO:0007669"/>
    <property type="project" value="UniProtKB-UniRule"/>
</dbReference>
<dbReference type="GO" id="GO:0008652">
    <property type="term" value="P:amino acid biosynthetic process"/>
    <property type="evidence" value="ECO:0007669"/>
    <property type="project" value="UniProtKB-KW"/>
</dbReference>
<dbReference type="GO" id="GO:0009073">
    <property type="term" value="P:aromatic amino acid family biosynthetic process"/>
    <property type="evidence" value="ECO:0007669"/>
    <property type="project" value="UniProtKB-KW"/>
</dbReference>
<dbReference type="GO" id="GO:0009423">
    <property type="term" value="P:chorismate biosynthetic process"/>
    <property type="evidence" value="ECO:0007669"/>
    <property type="project" value="UniProtKB-UniRule"/>
</dbReference>
<dbReference type="CDD" id="cd01556">
    <property type="entry name" value="EPSP_synthase"/>
    <property type="match status" value="1"/>
</dbReference>
<dbReference type="FunFam" id="3.65.10.10:FF:000005">
    <property type="entry name" value="3-phosphoshikimate 1-carboxyvinyltransferase"/>
    <property type="match status" value="1"/>
</dbReference>
<dbReference type="Gene3D" id="3.65.10.10">
    <property type="entry name" value="Enolpyruvate transferase domain"/>
    <property type="match status" value="2"/>
</dbReference>
<dbReference type="HAMAP" id="MF_00210">
    <property type="entry name" value="EPSP_synth"/>
    <property type="match status" value="1"/>
</dbReference>
<dbReference type="InterPro" id="IPR001986">
    <property type="entry name" value="Enolpyruvate_Tfrase_dom"/>
</dbReference>
<dbReference type="InterPro" id="IPR036968">
    <property type="entry name" value="Enolpyruvate_Tfrase_sf"/>
</dbReference>
<dbReference type="InterPro" id="IPR006264">
    <property type="entry name" value="EPSP_synthase"/>
</dbReference>
<dbReference type="InterPro" id="IPR023193">
    <property type="entry name" value="EPSP_synthase_CS"/>
</dbReference>
<dbReference type="InterPro" id="IPR013792">
    <property type="entry name" value="RNA3'P_cycl/enolpyr_Trfase_a/b"/>
</dbReference>
<dbReference type="NCBIfam" id="TIGR01356">
    <property type="entry name" value="aroA"/>
    <property type="match status" value="1"/>
</dbReference>
<dbReference type="PANTHER" id="PTHR21090">
    <property type="entry name" value="AROM/DEHYDROQUINATE SYNTHASE"/>
    <property type="match status" value="1"/>
</dbReference>
<dbReference type="PANTHER" id="PTHR21090:SF5">
    <property type="entry name" value="PENTAFUNCTIONAL AROM POLYPEPTIDE"/>
    <property type="match status" value="1"/>
</dbReference>
<dbReference type="Pfam" id="PF00275">
    <property type="entry name" value="EPSP_synthase"/>
    <property type="match status" value="1"/>
</dbReference>
<dbReference type="PIRSF" id="PIRSF000505">
    <property type="entry name" value="EPSPS"/>
    <property type="match status" value="1"/>
</dbReference>
<dbReference type="SUPFAM" id="SSF55205">
    <property type="entry name" value="EPT/RTPC-like"/>
    <property type="match status" value="1"/>
</dbReference>
<dbReference type="PROSITE" id="PS00104">
    <property type="entry name" value="EPSP_SYNTHASE_1"/>
    <property type="match status" value="1"/>
</dbReference>
<dbReference type="PROSITE" id="PS00885">
    <property type="entry name" value="EPSP_SYNTHASE_2"/>
    <property type="match status" value="1"/>
</dbReference>
<comment type="function">
    <text evidence="1">Catalyzes the transfer of the enolpyruvyl moiety of phosphoenolpyruvate (PEP) to the 5-hydroxyl of shikimate-3-phosphate (S3P) to produce enolpyruvyl shikimate-3-phosphate and inorganic phosphate.</text>
</comment>
<comment type="catalytic activity">
    <reaction evidence="1">
        <text>3-phosphoshikimate + phosphoenolpyruvate = 5-O-(1-carboxyvinyl)-3-phosphoshikimate + phosphate</text>
        <dbReference type="Rhea" id="RHEA:21256"/>
        <dbReference type="ChEBI" id="CHEBI:43474"/>
        <dbReference type="ChEBI" id="CHEBI:57701"/>
        <dbReference type="ChEBI" id="CHEBI:58702"/>
        <dbReference type="ChEBI" id="CHEBI:145989"/>
        <dbReference type="EC" id="2.5.1.19"/>
    </reaction>
    <physiologicalReaction direction="left-to-right" evidence="1">
        <dbReference type="Rhea" id="RHEA:21257"/>
    </physiologicalReaction>
</comment>
<comment type="pathway">
    <text evidence="1">Metabolic intermediate biosynthesis; chorismate biosynthesis; chorismate from D-erythrose 4-phosphate and phosphoenolpyruvate: step 6/7.</text>
</comment>
<comment type="subunit">
    <text evidence="1">Monomer.</text>
</comment>
<comment type="subcellular location">
    <subcellularLocation>
        <location evidence="1">Cytoplasm</location>
    </subcellularLocation>
</comment>
<comment type="similarity">
    <text evidence="1">Belongs to the EPSP synthase family.</text>
</comment>
<protein>
    <recommendedName>
        <fullName evidence="1">3-phosphoshikimate 1-carboxyvinyltransferase</fullName>
        <ecNumber evidence="1">2.5.1.19</ecNumber>
    </recommendedName>
    <alternativeName>
        <fullName evidence="1">5-enolpyruvylshikimate-3-phosphate synthase</fullName>
        <shortName evidence="1">EPSP synthase</shortName>
        <shortName evidence="1">EPSPS</shortName>
    </alternativeName>
</protein>
<name>AROA_NITOC</name>
<organism>
    <name type="scientific">Nitrosococcus oceani (strain ATCC 19707 / BCRC 17464 / JCM 30415 / NCIMB 11848 / C-107)</name>
    <dbReference type="NCBI Taxonomy" id="323261"/>
    <lineage>
        <taxon>Bacteria</taxon>
        <taxon>Pseudomonadati</taxon>
        <taxon>Pseudomonadota</taxon>
        <taxon>Gammaproteobacteria</taxon>
        <taxon>Chromatiales</taxon>
        <taxon>Chromatiaceae</taxon>
        <taxon>Nitrosococcus</taxon>
    </lineage>
</organism>
<evidence type="ECO:0000255" key="1">
    <source>
        <dbReference type="HAMAP-Rule" id="MF_00210"/>
    </source>
</evidence>
<keyword id="KW-0028">Amino-acid biosynthesis</keyword>
<keyword id="KW-0057">Aromatic amino acid biosynthesis</keyword>
<keyword id="KW-0963">Cytoplasm</keyword>
<keyword id="KW-1185">Reference proteome</keyword>
<keyword id="KW-0808">Transferase</keyword>
<accession>Q3JEN6</accession>
<reference key="1">
    <citation type="journal article" date="2006" name="Appl. Environ. Microbiol.">
        <title>Complete genome sequence of the marine, chemolithoautotrophic, ammonia-oxidizing bacterium Nitrosococcus oceani ATCC 19707.</title>
        <authorList>
            <person name="Klotz M.G."/>
            <person name="Arp D.J."/>
            <person name="Chain P.S.G."/>
            <person name="El-Sheikh A.F."/>
            <person name="Hauser L.J."/>
            <person name="Hommes N.G."/>
            <person name="Larimer F.W."/>
            <person name="Malfatti S.A."/>
            <person name="Norton J.M."/>
            <person name="Poret-Peterson A.T."/>
            <person name="Vergez L.M."/>
            <person name="Ward B.B."/>
        </authorList>
    </citation>
    <scope>NUCLEOTIDE SEQUENCE [LARGE SCALE GENOMIC DNA]</scope>
    <source>
        <strain>ATCC 19707 / BCRC 17464 / JCM 30415 / NCIMB 11848 / C-107</strain>
    </source>
</reference>
<feature type="chain" id="PRO_0000325364" description="3-phosphoshikimate 1-carboxyvinyltransferase">
    <location>
        <begin position="1"/>
        <end position="444"/>
    </location>
</feature>
<feature type="active site" description="Proton acceptor" evidence="1">
    <location>
        <position position="326"/>
    </location>
</feature>
<feature type="binding site" evidence="1">
    <location>
        <position position="32"/>
    </location>
    <ligand>
        <name>3-phosphoshikimate</name>
        <dbReference type="ChEBI" id="CHEBI:145989"/>
    </ligand>
</feature>
<feature type="binding site" evidence="1">
    <location>
        <position position="32"/>
    </location>
    <ligand>
        <name>phosphoenolpyruvate</name>
        <dbReference type="ChEBI" id="CHEBI:58702"/>
    </ligand>
</feature>
<feature type="binding site" evidence="1">
    <location>
        <position position="33"/>
    </location>
    <ligand>
        <name>3-phosphoshikimate</name>
        <dbReference type="ChEBI" id="CHEBI:145989"/>
    </ligand>
</feature>
<feature type="binding site" evidence="1">
    <location>
        <position position="37"/>
    </location>
    <ligand>
        <name>3-phosphoshikimate</name>
        <dbReference type="ChEBI" id="CHEBI:145989"/>
    </ligand>
</feature>
<feature type="binding site" evidence="1">
    <location>
        <position position="105"/>
    </location>
    <ligand>
        <name>phosphoenolpyruvate</name>
        <dbReference type="ChEBI" id="CHEBI:58702"/>
    </ligand>
</feature>
<feature type="binding site" evidence="1">
    <location>
        <position position="133"/>
    </location>
    <ligand>
        <name>phosphoenolpyruvate</name>
        <dbReference type="ChEBI" id="CHEBI:58702"/>
    </ligand>
</feature>
<feature type="binding site" evidence="1">
    <location>
        <position position="178"/>
    </location>
    <ligand>
        <name>3-phosphoshikimate</name>
        <dbReference type="ChEBI" id="CHEBI:145989"/>
    </ligand>
</feature>
<feature type="binding site" evidence="1">
    <location>
        <position position="180"/>
    </location>
    <ligand>
        <name>3-phosphoshikimate</name>
        <dbReference type="ChEBI" id="CHEBI:145989"/>
    </ligand>
</feature>
<feature type="binding site" evidence="1">
    <location>
        <position position="180"/>
    </location>
    <ligand>
        <name>phosphoenolpyruvate</name>
        <dbReference type="ChEBI" id="CHEBI:58702"/>
    </ligand>
</feature>
<feature type="binding site" evidence="1">
    <location>
        <position position="326"/>
    </location>
    <ligand>
        <name>3-phosphoshikimate</name>
        <dbReference type="ChEBI" id="CHEBI:145989"/>
    </ligand>
</feature>
<feature type="binding site" evidence="1">
    <location>
        <position position="353"/>
    </location>
    <ligand>
        <name>3-phosphoshikimate</name>
        <dbReference type="ChEBI" id="CHEBI:145989"/>
    </ligand>
</feature>
<feature type="binding site" evidence="1">
    <location>
        <position position="357"/>
    </location>
    <ligand>
        <name>phosphoenolpyruvate</name>
        <dbReference type="ChEBI" id="CHEBI:58702"/>
    </ligand>
</feature>
<feature type="binding site" evidence="1">
    <location>
        <position position="398"/>
    </location>
    <ligand>
        <name>phosphoenolpyruvate</name>
        <dbReference type="ChEBI" id="CHEBI:58702"/>
    </ligand>
</feature>
<gene>
    <name evidence="1" type="primary">aroA</name>
    <name type="ordered locus">Noc_0177</name>
</gene>
<proteinExistence type="inferred from homology"/>
<sequence>MQPIEEVSQDTMAFVVAPGGALRGRLRVPGDKSISHRAIILGALAEGITQITGFLEGEDTLATLQAFRDLGVSIEGPEGGRVKIHGVSLQGLRAPEKPLYLGNSGTSVRLLAGLFAGQSFDVILRGDESLSRRPMRRVCDPLARMGAFIETTAQGTPPLHIHGGQSLYGIEYAMPMASAQVKSSLLLAGLYASGRTCVVEPAPTRDHSERMLAGFGYPVEREGAKVCIQGGGTLHGTVVEIPADISSAAFFMVGAAIGKGSDILLEHVGINPTRTGIIDILRRMGAEIEIRETGVVGGEPVAAIRVRASRLHGINIPEDLVPLAIDEFPALFIAAACAEGETVLAGAGELRVKESDRIQVMADGLQALGISAQPTADGIIIQGGELQGGEVHSHGDHRCAMAFAMASLVAKGPIIIRDCANVATSFPGFLELACGAGLAIRHGK</sequence>